<proteinExistence type="inferred from homology"/>
<evidence type="ECO:0000255" key="1">
    <source>
        <dbReference type="HAMAP-Rule" id="MF_01155"/>
    </source>
</evidence>
<organism>
    <name type="scientific">Escherichia coli O6:H1 (strain CFT073 / ATCC 700928 / UPEC)</name>
    <dbReference type="NCBI Taxonomy" id="199310"/>
    <lineage>
        <taxon>Bacteria</taxon>
        <taxon>Pseudomonadati</taxon>
        <taxon>Pseudomonadota</taxon>
        <taxon>Gammaproteobacteria</taxon>
        <taxon>Enterobacterales</taxon>
        <taxon>Enterobacteriaceae</taxon>
        <taxon>Escherichia</taxon>
    </lineage>
</organism>
<comment type="function">
    <text evidence="1">Interacts with CbpA and inhibits both the DnaJ-like co-chaperone activity and the DNA binding activity of CbpA. Together with CbpA, modulates the activity of the DnaK chaperone system. Does not inhibit the co-chaperone activity of DnaJ.</text>
</comment>
<comment type="similarity">
    <text evidence="1">Belongs to the CbpM family.</text>
</comment>
<gene>
    <name evidence="1" type="primary">cbpM</name>
    <name type="ordered locus">c1135</name>
</gene>
<accession>Q8FJ51</accession>
<reference key="1">
    <citation type="journal article" date="2002" name="Proc. Natl. Acad. Sci. U.S.A.">
        <title>Extensive mosaic structure revealed by the complete genome sequence of uropathogenic Escherichia coli.</title>
        <authorList>
            <person name="Welch R.A."/>
            <person name="Burland V."/>
            <person name="Plunkett G. III"/>
            <person name="Redford P."/>
            <person name="Roesch P."/>
            <person name="Rasko D."/>
            <person name="Buckles E.L."/>
            <person name="Liou S.-R."/>
            <person name="Boutin A."/>
            <person name="Hackett J."/>
            <person name="Stroud D."/>
            <person name="Mayhew G.F."/>
            <person name="Rose D.J."/>
            <person name="Zhou S."/>
            <person name="Schwartz D.C."/>
            <person name="Perna N.T."/>
            <person name="Mobley H.L.T."/>
            <person name="Donnenberg M.S."/>
            <person name="Blattner F.R."/>
        </authorList>
    </citation>
    <scope>NUCLEOTIDE SEQUENCE [LARGE SCALE GENOMIC DNA]</scope>
    <source>
        <strain>CFT073 / ATCC 700928 / UPEC</strain>
    </source>
</reference>
<protein>
    <recommendedName>
        <fullName evidence="1">Chaperone modulatory protein CbpM</fullName>
    </recommendedName>
</protein>
<sequence length="101" mass="11443">MANVTVTFTITEFCLHTGISEEELNEIVGLGVVEPSEIQETTWVFDDHAAIVVQRAVRLRHELALDWPGIAVALTLMDDIAHLKQENRLLRQRLSRFVAHP</sequence>
<feature type="chain" id="PRO_0000211629" description="Chaperone modulatory protein CbpM">
    <location>
        <begin position="1"/>
        <end position="101"/>
    </location>
</feature>
<dbReference type="EMBL" id="AE014075">
    <property type="protein sequence ID" value="AAN79603.1"/>
    <property type="molecule type" value="Genomic_DNA"/>
</dbReference>
<dbReference type="RefSeq" id="WP_000024569.1">
    <property type="nucleotide sequence ID" value="NZ_CP051263.1"/>
</dbReference>
<dbReference type="SMR" id="Q8FJ51"/>
<dbReference type="STRING" id="199310.c1135"/>
<dbReference type="KEGG" id="ecc:c1135"/>
<dbReference type="eggNOG" id="COG0789">
    <property type="taxonomic scope" value="Bacteria"/>
</dbReference>
<dbReference type="HOGENOM" id="CLU_144710_3_1_6"/>
<dbReference type="BioCyc" id="ECOL199310:C1135-MONOMER"/>
<dbReference type="Proteomes" id="UP000001410">
    <property type="component" value="Chromosome"/>
</dbReference>
<dbReference type="FunFam" id="1.10.1660.10:FF:000006">
    <property type="entry name" value="Chaperone modulatory protein CbpM"/>
    <property type="match status" value="1"/>
</dbReference>
<dbReference type="Gene3D" id="1.10.1660.10">
    <property type="match status" value="1"/>
</dbReference>
<dbReference type="HAMAP" id="MF_01155">
    <property type="entry name" value="CbpM"/>
    <property type="match status" value="1"/>
</dbReference>
<dbReference type="InterPro" id="IPR022835">
    <property type="entry name" value="CbpM"/>
</dbReference>
<dbReference type="NCBIfam" id="NF007617">
    <property type="entry name" value="PRK10265.1"/>
    <property type="match status" value="1"/>
</dbReference>
<dbReference type="Pfam" id="PF13591">
    <property type="entry name" value="MerR_2"/>
    <property type="match status" value="1"/>
</dbReference>
<keyword id="KW-1185">Reference proteome</keyword>
<name>CBPM_ECOL6</name>